<sequence>MKMKLYRAYAKVNIFLKIQGSRGNYHEIVSRFMRVPSLYDELSFVPKESSEEFELIGSFSCKREQNTIYKAYRALLEFLDEASGLHVENLMQKYAVKVTKNIPTFAGLGGGSSDAATFLKMCNEVLHLGLSQNELALIGLHVGADVPFFIYGYNSANVSGIGEVVEEFKEELLDIEVFTPQLEISTPKVYNLYRENFYNPVDGFEVERLKKISSKDALSAMSAAEANDLFAPAIQLYKELKNHYKYGYYFSGSGSSFFRVKEKENI</sequence>
<organism>
    <name type="scientific">Sulfurimonas denitrificans (strain ATCC 33889 / DSM 1251)</name>
    <name type="common">Thiomicrospira denitrificans (strain ATCC 33889 / DSM 1251)</name>
    <dbReference type="NCBI Taxonomy" id="326298"/>
    <lineage>
        <taxon>Bacteria</taxon>
        <taxon>Pseudomonadati</taxon>
        <taxon>Campylobacterota</taxon>
        <taxon>Epsilonproteobacteria</taxon>
        <taxon>Campylobacterales</taxon>
        <taxon>Sulfurimonadaceae</taxon>
        <taxon>Sulfurimonas</taxon>
    </lineage>
</organism>
<name>ISPE_SULDN</name>
<feature type="chain" id="PRO_0000235149" description="4-diphosphocytidyl-2-C-methyl-D-erythritol kinase">
    <location>
        <begin position="1"/>
        <end position="266"/>
    </location>
</feature>
<feature type="active site" evidence="1">
    <location>
        <position position="11"/>
    </location>
</feature>
<feature type="active site" evidence="1">
    <location>
        <position position="145"/>
    </location>
</feature>
<feature type="binding site" evidence="1">
    <location>
        <begin position="103"/>
        <end position="113"/>
    </location>
    <ligand>
        <name>ATP</name>
        <dbReference type="ChEBI" id="CHEBI:30616"/>
    </ligand>
</feature>
<gene>
    <name evidence="1" type="primary">ispE</name>
    <name type="ordered locus">Suden_0440</name>
</gene>
<comment type="function">
    <text evidence="1">Catalyzes the phosphorylation of the position 2 hydroxy group of 4-diphosphocytidyl-2C-methyl-D-erythritol.</text>
</comment>
<comment type="catalytic activity">
    <reaction evidence="1">
        <text>4-CDP-2-C-methyl-D-erythritol + ATP = 4-CDP-2-C-methyl-D-erythritol 2-phosphate + ADP + H(+)</text>
        <dbReference type="Rhea" id="RHEA:18437"/>
        <dbReference type="ChEBI" id="CHEBI:15378"/>
        <dbReference type="ChEBI" id="CHEBI:30616"/>
        <dbReference type="ChEBI" id="CHEBI:57823"/>
        <dbReference type="ChEBI" id="CHEBI:57919"/>
        <dbReference type="ChEBI" id="CHEBI:456216"/>
        <dbReference type="EC" id="2.7.1.148"/>
    </reaction>
</comment>
<comment type="pathway">
    <text evidence="1">Isoprenoid biosynthesis; isopentenyl diphosphate biosynthesis via DXP pathway; isopentenyl diphosphate from 1-deoxy-D-xylulose 5-phosphate: step 3/6.</text>
</comment>
<comment type="similarity">
    <text evidence="1">Belongs to the GHMP kinase family. IspE subfamily.</text>
</comment>
<keyword id="KW-0067">ATP-binding</keyword>
<keyword id="KW-0414">Isoprene biosynthesis</keyword>
<keyword id="KW-0418">Kinase</keyword>
<keyword id="KW-0547">Nucleotide-binding</keyword>
<keyword id="KW-1185">Reference proteome</keyword>
<keyword id="KW-0808">Transferase</keyword>
<reference key="1">
    <citation type="journal article" date="2008" name="Appl. Environ. Microbiol.">
        <title>Genome of the epsilonproteobacterial chemolithoautotroph Sulfurimonas denitrificans.</title>
        <authorList>
            <person name="Sievert S.M."/>
            <person name="Scott K.M."/>
            <person name="Klotz M.G."/>
            <person name="Chain P.S.G."/>
            <person name="Hauser L.J."/>
            <person name="Hemp J."/>
            <person name="Huegler M."/>
            <person name="Land M."/>
            <person name="Lapidus A."/>
            <person name="Larimer F.W."/>
            <person name="Lucas S."/>
            <person name="Malfatti S.A."/>
            <person name="Meyer F."/>
            <person name="Paulsen I.T."/>
            <person name="Ren Q."/>
            <person name="Simon J."/>
            <person name="Bailey K."/>
            <person name="Diaz E."/>
            <person name="Fitzpatrick K.A."/>
            <person name="Glover B."/>
            <person name="Gwatney N."/>
            <person name="Korajkic A."/>
            <person name="Long A."/>
            <person name="Mobberley J.M."/>
            <person name="Pantry S.N."/>
            <person name="Pazder G."/>
            <person name="Peterson S."/>
            <person name="Quintanilla J.D."/>
            <person name="Sprinkle R."/>
            <person name="Stephens J."/>
            <person name="Thomas P."/>
            <person name="Vaughn R."/>
            <person name="Weber M.J."/>
            <person name="Wooten L.L."/>
        </authorList>
    </citation>
    <scope>NUCLEOTIDE SEQUENCE [LARGE SCALE GENOMIC DNA]</scope>
    <source>
        <strain>ATCC 33889 / DSM 1251</strain>
    </source>
</reference>
<dbReference type="EC" id="2.7.1.148" evidence="1"/>
<dbReference type="EMBL" id="CP000153">
    <property type="protein sequence ID" value="ABB43721.1"/>
    <property type="molecule type" value="Genomic_DNA"/>
</dbReference>
<dbReference type="RefSeq" id="WP_011372075.1">
    <property type="nucleotide sequence ID" value="NC_007575.1"/>
</dbReference>
<dbReference type="SMR" id="Q30TG0"/>
<dbReference type="STRING" id="326298.Suden_0440"/>
<dbReference type="KEGG" id="tdn:Suden_0440"/>
<dbReference type="eggNOG" id="COG1947">
    <property type="taxonomic scope" value="Bacteria"/>
</dbReference>
<dbReference type="HOGENOM" id="CLU_053057_2_2_7"/>
<dbReference type="UniPathway" id="UPA00056">
    <property type="reaction ID" value="UER00094"/>
</dbReference>
<dbReference type="Proteomes" id="UP000002714">
    <property type="component" value="Chromosome"/>
</dbReference>
<dbReference type="GO" id="GO:0050515">
    <property type="term" value="F:4-(cytidine 5'-diphospho)-2-C-methyl-D-erythritol kinase activity"/>
    <property type="evidence" value="ECO:0007669"/>
    <property type="project" value="UniProtKB-UniRule"/>
</dbReference>
<dbReference type="GO" id="GO:0005524">
    <property type="term" value="F:ATP binding"/>
    <property type="evidence" value="ECO:0007669"/>
    <property type="project" value="UniProtKB-UniRule"/>
</dbReference>
<dbReference type="GO" id="GO:0019288">
    <property type="term" value="P:isopentenyl diphosphate biosynthetic process, methylerythritol 4-phosphate pathway"/>
    <property type="evidence" value="ECO:0007669"/>
    <property type="project" value="UniProtKB-UniRule"/>
</dbReference>
<dbReference type="GO" id="GO:0016114">
    <property type="term" value="P:terpenoid biosynthetic process"/>
    <property type="evidence" value="ECO:0007669"/>
    <property type="project" value="InterPro"/>
</dbReference>
<dbReference type="Gene3D" id="3.30.230.10">
    <property type="match status" value="1"/>
</dbReference>
<dbReference type="Gene3D" id="3.30.70.890">
    <property type="entry name" value="GHMP kinase, C-terminal domain"/>
    <property type="match status" value="1"/>
</dbReference>
<dbReference type="HAMAP" id="MF_00061">
    <property type="entry name" value="IspE"/>
    <property type="match status" value="1"/>
</dbReference>
<dbReference type="InterPro" id="IPR036554">
    <property type="entry name" value="GHMP_kinase_C_sf"/>
</dbReference>
<dbReference type="InterPro" id="IPR006204">
    <property type="entry name" value="GHMP_kinase_N_dom"/>
</dbReference>
<dbReference type="InterPro" id="IPR004424">
    <property type="entry name" value="IspE"/>
</dbReference>
<dbReference type="InterPro" id="IPR020568">
    <property type="entry name" value="Ribosomal_Su5_D2-typ_SF"/>
</dbReference>
<dbReference type="InterPro" id="IPR014721">
    <property type="entry name" value="Ribsml_uS5_D2-typ_fold_subgr"/>
</dbReference>
<dbReference type="NCBIfam" id="TIGR00154">
    <property type="entry name" value="ispE"/>
    <property type="match status" value="1"/>
</dbReference>
<dbReference type="NCBIfam" id="NF003216">
    <property type="entry name" value="PRK04181.1"/>
    <property type="match status" value="1"/>
</dbReference>
<dbReference type="PANTHER" id="PTHR43527">
    <property type="entry name" value="4-DIPHOSPHOCYTIDYL-2-C-METHYL-D-ERYTHRITOL KINASE, CHLOROPLASTIC"/>
    <property type="match status" value="1"/>
</dbReference>
<dbReference type="PANTHER" id="PTHR43527:SF2">
    <property type="entry name" value="4-DIPHOSPHOCYTIDYL-2-C-METHYL-D-ERYTHRITOL KINASE, CHLOROPLASTIC"/>
    <property type="match status" value="1"/>
</dbReference>
<dbReference type="Pfam" id="PF00288">
    <property type="entry name" value="GHMP_kinases_N"/>
    <property type="match status" value="1"/>
</dbReference>
<dbReference type="PIRSF" id="PIRSF010376">
    <property type="entry name" value="IspE"/>
    <property type="match status" value="1"/>
</dbReference>
<dbReference type="SUPFAM" id="SSF55060">
    <property type="entry name" value="GHMP Kinase, C-terminal domain"/>
    <property type="match status" value="1"/>
</dbReference>
<dbReference type="SUPFAM" id="SSF54211">
    <property type="entry name" value="Ribosomal protein S5 domain 2-like"/>
    <property type="match status" value="1"/>
</dbReference>
<proteinExistence type="inferred from homology"/>
<evidence type="ECO:0000255" key="1">
    <source>
        <dbReference type="HAMAP-Rule" id="MF_00061"/>
    </source>
</evidence>
<protein>
    <recommendedName>
        <fullName evidence="1">4-diphosphocytidyl-2-C-methyl-D-erythritol kinase</fullName>
        <shortName evidence="1">CMK</shortName>
        <ecNumber evidence="1">2.7.1.148</ecNumber>
    </recommendedName>
    <alternativeName>
        <fullName evidence="1">4-(cytidine-5'-diphospho)-2-C-methyl-D-erythritol kinase</fullName>
    </alternativeName>
</protein>
<accession>Q30TG0</accession>